<gene>
    <name evidence="1" type="primary">rlmL</name>
    <name type="ordered locus">YPN_2559</name>
    <name type="ORF">YP516_2877</name>
</gene>
<protein>
    <recommendedName>
        <fullName evidence="1">Ribosomal RNA large subunit methyltransferase K/L</fullName>
    </recommendedName>
    <domain>
        <recommendedName>
            <fullName evidence="1">23S rRNA m2G2445 methyltransferase</fullName>
            <ecNumber evidence="1">2.1.1.173</ecNumber>
        </recommendedName>
        <alternativeName>
            <fullName evidence="1">rRNA (guanine-N(2)-)-methyltransferase RlmL</fullName>
        </alternativeName>
    </domain>
    <domain>
        <recommendedName>
            <fullName evidence="1">23S rRNA m7G2069 methyltransferase</fullName>
            <ecNumber evidence="1">2.1.1.264</ecNumber>
        </recommendedName>
        <alternativeName>
            <fullName evidence="1">rRNA (guanine-N(7)-)-methyltransferase RlmK</fullName>
        </alternativeName>
    </domain>
</protein>
<comment type="function">
    <text evidence="1">Specifically methylates the guanine in position 2445 (m2G2445) and the guanine in position 2069 (m7G2069) of 23S rRNA.</text>
</comment>
<comment type="catalytic activity">
    <reaction evidence="1">
        <text>guanosine(2445) in 23S rRNA + S-adenosyl-L-methionine = N(2)-methylguanosine(2445) in 23S rRNA + S-adenosyl-L-homocysteine + H(+)</text>
        <dbReference type="Rhea" id="RHEA:42740"/>
        <dbReference type="Rhea" id="RHEA-COMP:10215"/>
        <dbReference type="Rhea" id="RHEA-COMP:10216"/>
        <dbReference type="ChEBI" id="CHEBI:15378"/>
        <dbReference type="ChEBI" id="CHEBI:57856"/>
        <dbReference type="ChEBI" id="CHEBI:59789"/>
        <dbReference type="ChEBI" id="CHEBI:74269"/>
        <dbReference type="ChEBI" id="CHEBI:74481"/>
        <dbReference type="EC" id="2.1.1.173"/>
    </reaction>
</comment>
<comment type="catalytic activity">
    <reaction evidence="1">
        <text>guanosine(2069) in 23S rRNA + S-adenosyl-L-methionine = N(2)-methylguanosine(2069) in 23S rRNA + S-adenosyl-L-homocysteine + H(+)</text>
        <dbReference type="Rhea" id="RHEA:43772"/>
        <dbReference type="Rhea" id="RHEA-COMP:10688"/>
        <dbReference type="Rhea" id="RHEA-COMP:10689"/>
        <dbReference type="ChEBI" id="CHEBI:15378"/>
        <dbReference type="ChEBI" id="CHEBI:57856"/>
        <dbReference type="ChEBI" id="CHEBI:59789"/>
        <dbReference type="ChEBI" id="CHEBI:74269"/>
        <dbReference type="ChEBI" id="CHEBI:74481"/>
        <dbReference type="EC" id="2.1.1.264"/>
    </reaction>
</comment>
<comment type="subcellular location">
    <subcellularLocation>
        <location evidence="1">Cytoplasm</location>
    </subcellularLocation>
</comment>
<comment type="similarity">
    <text evidence="1">Belongs to the methyltransferase superfamily. RlmKL family.</text>
</comment>
<organism>
    <name type="scientific">Yersinia pestis bv. Antiqua (strain Nepal516)</name>
    <dbReference type="NCBI Taxonomy" id="377628"/>
    <lineage>
        <taxon>Bacteria</taxon>
        <taxon>Pseudomonadati</taxon>
        <taxon>Pseudomonadota</taxon>
        <taxon>Gammaproteobacteria</taxon>
        <taxon>Enterobacterales</taxon>
        <taxon>Yersiniaceae</taxon>
        <taxon>Yersinia</taxon>
    </lineage>
</organism>
<proteinExistence type="inferred from homology"/>
<name>RLMKL_YERPN</name>
<keyword id="KW-0963">Cytoplasm</keyword>
<keyword id="KW-0489">Methyltransferase</keyword>
<keyword id="KW-0694">RNA-binding</keyword>
<keyword id="KW-0698">rRNA processing</keyword>
<keyword id="KW-0949">S-adenosyl-L-methionine</keyword>
<keyword id="KW-0808">Transferase</keyword>
<sequence length="706" mass="79387">MNSLFASTARGLEELLKSELEALGAHDCKIVQGGVHFQGDDRLMYQSLLWSRLASRILLPLNEFKVYSDLDLYLGVQAIDWPSIFGVDKTFAVHFSGVNDEIRNSQYGALKVKDAIVDSFTRKMDQRPTVAKQQPDIRVNVFLQRDMASVALDLSGEGLHQRGYRDLTGQAPLKENLAAAIIQRSGWQPGTPMVDPMCGSGTLLIEAAMMASDRAPGLHRGHWGFTAWNAFNEALWRELTTEAQVRARRGLLETSSRFFGSDIDRRVIEMARANARRAGVAELITFNANDISKLVNPLPEGPVGTVISNPPYGERLESEPALIALHNMFGRMMKTAFGGWRLSLFSASPELLSCLQLRADREFKAKNGPLDCVQKNYQLTANPLGAGGALVAEDYANRLRKNVKKLDKWAKQQGIECYRLYDADLPDYNVAVDRYGSKVVVQEYAPPKTIDPQKARQRLFDVINATLAVLELPSNQLVLKTRERQKGKNQYEKLAQKGEFLLVSEYNAKLWVNLTDYLDTGLFLDHRIARQMLGKMSQGKDFLNLFAYTGTASVHAGLGGARSTTTVDMSRTYLEWAEKNLRVNGLTGQQHRLIQADCLSWLSNTDEQFDVIFIDPPTFSNSKRMETTFDVQRDHLVLMKELKRLLRRKGTIMFSNNKRGFQMDLAGIAALGLEAKEITALTQSEDFARNRQIHNCWLVTHSQEEK</sequence>
<feature type="chain" id="PRO_0000366870" description="Ribosomal RNA large subunit methyltransferase K/L">
    <location>
        <begin position="1"/>
        <end position="706"/>
    </location>
</feature>
<feature type="domain" description="THUMP" evidence="1">
    <location>
        <begin position="43"/>
        <end position="154"/>
    </location>
</feature>
<dbReference type="EC" id="2.1.1.173" evidence="1"/>
<dbReference type="EC" id="2.1.1.264" evidence="1"/>
<dbReference type="EMBL" id="CP000305">
    <property type="protein sequence ID" value="ABG18887.1"/>
    <property type="molecule type" value="Genomic_DNA"/>
</dbReference>
<dbReference type="EMBL" id="ACNQ01000017">
    <property type="protein sequence ID" value="EEO74993.1"/>
    <property type="molecule type" value="Genomic_DNA"/>
</dbReference>
<dbReference type="SMR" id="Q1CGJ3"/>
<dbReference type="KEGG" id="ypn:YPN_2559"/>
<dbReference type="HOGENOM" id="CLU_014042_2_0_6"/>
<dbReference type="Proteomes" id="UP000008936">
    <property type="component" value="Chromosome"/>
</dbReference>
<dbReference type="GO" id="GO:0005737">
    <property type="term" value="C:cytoplasm"/>
    <property type="evidence" value="ECO:0007669"/>
    <property type="project" value="UniProtKB-SubCell"/>
</dbReference>
<dbReference type="GO" id="GO:0052915">
    <property type="term" value="F:23S rRNA (guanine(2445)-N(2))-methyltransferase activity"/>
    <property type="evidence" value="ECO:0007669"/>
    <property type="project" value="UniProtKB-UniRule"/>
</dbReference>
<dbReference type="GO" id="GO:0003723">
    <property type="term" value="F:RNA binding"/>
    <property type="evidence" value="ECO:0007669"/>
    <property type="project" value="UniProtKB-KW"/>
</dbReference>
<dbReference type="GO" id="GO:0070043">
    <property type="term" value="F:rRNA (guanine-N7-)-methyltransferase activity"/>
    <property type="evidence" value="ECO:0007669"/>
    <property type="project" value="UniProtKB-UniRule"/>
</dbReference>
<dbReference type="CDD" id="cd02440">
    <property type="entry name" value="AdoMet_MTases"/>
    <property type="match status" value="2"/>
</dbReference>
<dbReference type="CDD" id="cd11715">
    <property type="entry name" value="THUMP_AdoMetMT"/>
    <property type="match status" value="1"/>
</dbReference>
<dbReference type="FunFam" id="3.30.750.80:FF:000001">
    <property type="entry name" value="Ribosomal RNA large subunit methyltransferase K/L"/>
    <property type="match status" value="1"/>
</dbReference>
<dbReference type="FunFam" id="3.40.50.150:FF:000039">
    <property type="entry name" value="Ribosomal RNA large subunit methyltransferase K/L"/>
    <property type="match status" value="1"/>
</dbReference>
<dbReference type="Gene3D" id="3.30.2130.30">
    <property type="match status" value="1"/>
</dbReference>
<dbReference type="Gene3D" id="3.30.750.80">
    <property type="entry name" value="RNA methyltransferase domain (HRMD) like"/>
    <property type="match status" value="1"/>
</dbReference>
<dbReference type="Gene3D" id="3.40.50.150">
    <property type="entry name" value="Vaccinia Virus protein VP39"/>
    <property type="match status" value="2"/>
</dbReference>
<dbReference type="HAMAP" id="MF_01858">
    <property type="entry name" value="23SrRNA_methyltr_KL"/>
    <property type="match status" value="1"/>
</dbReference>
<dbReference type="InterPro" id="IPR017244">
    <property type="entry name" value="23SrRNA_methyltr_KL"/>
</dbReference>
<dbReference type="InterPro" id="IPR002052">
    <property type="entry name" value="DNA_methylase_N6_adenine_CS"/>
</dbReference>
<dbReference type="InterPro" id="IPR000241">
    <property type="entry name" value="RlmKL-like_Mtase"/>
</dbReference>
<dbReference type="InterPro" id="IPR053943">
    <property type="entry name" value="RlmKL-like_Mtase_CS"/>
</dbReference>
<dbReference type="InterPro" id="IPR054170">
    <property type="entry name" value="RlmL_1st"/>
</dbReference>
<dbReference type="InterPro" id="IPR019614">
    <property type="entry name" value="SAM-dep_methyl-trfase"/>
</dbReference>
<dbReference type="InterPro" id="IPR029063">
    <property type="entry name" value="SAM-dependent_MTases_sf"/>
</dbReference>
<dbReference type="InterPro" id="IPR004114">
    <property type="entry name" value="THUMP_dom"/>
</dbReference>
<dbReference type="NCBIfam" id="NF008748">
    <property type="entry name" value="PRK11783.1"/>
    <property type="match status" value="1"/>
</dbReference>
<dbReference type="PANTHER" id="PTHR47313">
    <property type="entry name" value="RIBOSOMAL RNA LARGE SUBUNIT METHYLTRANSFERASE K/L"/>
    <property type="match status" value="1"/>
</dbReference>
<dbReference type="PANTHER" id="PTHR47313:SF1">
    <property type="entry name" value="RIBOSOMAL RNA LARGE SUBUNIT METHYLTRANSFERASE K_L"/>
    <property type="match status" value="1"/>
</dbReference>
<dbReference type="Pfam" id="PF10672">
    <property type="entry name" value="Methyltrans_SAM"/>
    <property type="match status" value="1"/>
</dbReference>
<dbReference type="Pfam" id="PF22020">
    <property type="entry name" value="RlmL_1st"/>
    <property type="match status" value="1"/>
</dbReference>
<dbReference type="Pfam" id="PF02926">
    <property type="entry name" value="THUMP"/>
    <property type="match status" value="1"/>
</dbReference>
<dbReference type="Pfam" id="PF01170">
    <property type="entry name" value="UPF0020"/>
    <property type="match status" value="1"/>
</dbReference>
<dbReference type="PIRSF" id="PIRSF037618">
    <property type="entry name" value="RNA_Mtase_bacteria_prd"/>
    <property type="match status" value="1"/>
</dbReference>
<dbReference type="SMART" id="SM00981">
    <property type="entry name" value="THUMP"/>
    <property type="match status" value="1"/>
</dbReference>
<dbReference type="SUPFAM" id="SSF53335">
    <property type="entry name" value="S-adenosyl-L-methionine-dependent methyltransferases"/>
    <property type="match status" value="2"/>
</dbReference>
<dbReference type="PROSITE" id="PS51165">
    <property type="entry name" value="THUMP"/>
    <property type="match status" value="1"/>
</dbReference>
<dbReference type="PROSITE" id="PS01261">
    <property type="entry name" value="UPF0020"/>
    <property type="match status" value="1"/>
</dbReference>
<evidence type="ECO:0000255" key="1">
    <source>
        <dbReference type="HAMAP-Rule" id="MF_01858"/>
    </source>
</evidence>
<reference key="1">
    <citation type="journal article" date="2006" name="J. Bacteriol.">
        <title>Complete genome sequence of Yersinia pestis strains Antiqua and Nepal516: evidence of gene reduction in an emerging pathogen.</title>
        <authorList>
            <person name="Chain P.S.G."/>
            <person name="Hu P."/>
            <person name="Malfatti S.A."/>
            <person name="Radnedge L."/>
            <person name="Larimer F."/>
            <person name="Vergez L.M."/>
            <person name="Worsham P."/>
            <person name="Chu M.C."/>
            <person name="Andersen G.L."/>
        </authorList>
    </citation>
    <scope>NUCLEOTIDE SEQUENCE [LARGE SCALE GENOMIC DNA]</scope>
    <source>
        <strain>Nepal516</strain>
    </source>
</reference>
<reference key="2">
    <citation type="submission" date="2009-04" db="EMBL/GenBank/DDBJ databases">
        <title>Yersinia pestis Nepal516A whole genome shotgun sequencing project.</title>
        <authorList>
            <person name="Plunkett G. III"/>
            <person name="Anderson B.D."/>
            <person name="Baumler D.J."/>
            <person name="Burland V."/>
            <person name="Cabot E.L."/>
            <person name="Glasner J.D."/>
            <person name="Mau B."/>
            <person name="Neeno-Eckwall E."/>
            <person name="Perna N.T."/>
            <person name="Munk A.C."/>
            <person name="Tapia R."/>
            <person name="Green L.D."/>
            <person name="Rogers Y.C."/>
            <person name="Detter J.C."/>
            <person name="Bruce D.C."/>
            <person name="Brettin T.S."/>
        </authorList>
    </citation>
    <scope>NUCLEOTIDE SEQUENCE [LARGE SCALE GENOMIC DNA]</scope>
    <source>
        <strain>Nepal516</strain>
    </source>
</reference>
<accession>Q1CGJ3</accession>
<accession>C4GVP3</accession>